<keyword id="KW-0227">DNA damage</keyword>
<keyword id="KW-0234">DNA repair</keyword>
<keyword id="KW-0238">DNA-binding</keyword>
<keyword id="KW-0326">Glycosidase</keyword>
<keyword id="KW-0378">Hydrolase</keyword>
<keyword id="KW-0456">Lyase</keyword>
<keyword id="KW-0479">Metal-binding</keyword>
<keyword id="KW-0511">Multifunctional enzyme</keyword>
<keyword id="KW-0862">Zinc</keyword>
<keyword id="KW-0863">Zinc-finger</keyword>
<organism>
    <name type="scientific">Bordetella parapertussis (strain 12822 / ATCC BAA-587 / NCTC 13253)</name>
    <dbReference type="NCBI Taxonomy" id="257311"/>
    <lineage>
        <taxon>Bacteria</taxon>
        <taxon>Pseudomonadati</taxon>
        <taxon>Pseudomonadota</taxon>
        <taxon>Betaproteobacteria</taxon>
        <taxon>Burkholderiales</taxon>
        <taxon>Alcaligenaceae</taxon>
        <taxon>Bordetella</taxon>
    </lineage>
</organism>
<feature type="initiator methionine" description="Removed" evidence="1">
    <location>
        <position position="1"/>
    </location>
</feature>
<feature type="chain" id="PRO_0000170812" description="Formamidopyrimidine-DNA glycosylase">
    <location>
        <begin position="2"/>
        <end position="275"/>
    </location>
</feature>
<feature type="zinc finger region" description="FPG-type" evidence="2">
    <location>
        <begin position="240"/>
        <end position="274"/>
    </location>
</feature>
<feature type="active site" description="Schiff-base intermediate with DNA" evidence="2">
    <location>
        <position position="2"/>
    </location>
</feature>
<feature type="active site" description="Proton donor" evidence="2">
    <location>
        <position position="3"/>
    </location>
</feature>
<feature type="active site" description="Proton donor; for beta-elimination activity" evidence="2">
    <location>
        <position position="58"/>
    </location>
</feature>
<feature type="active site" description="Proton donor; for delta-elimination activity" evidence="2">
    <location>
        <position position="264"/>
    </location>
</feature>
<feature type="binding site" evidence="2">
    <location>
        <position position="91"/>
    </location>
    <ligand>
        <name>DNA</name>
        <dbReference type="ChEBI" id="CHEBI:16991"/>
    </ligand>
</feature>
<feature type="binding site" evidence="2">
    <location>
        <position position="109"/>
    </location>
    <ligand>
        <name>DNA</name>
        <dbReference type="ChEBI" id="CHEBI:16991"/>
    </ligand>
</feature>
<feature type="binding site" evidence="2">
    <location>
        <position position="154"/>
    </location>
    <ligand>
        <name>DNA</name>
        <dbReference type="ChEBI" id="CHEBI:16991"/>
    </ligand>
</feature>
<sequence length="275" mass="30427">MPELPEVETTRRGIDTVITGRTLRRLVVREARMRWPIPPALPDLLAGRTVLECGRRGKYLLLRFDHGVQIVHLGMSGSLRRVPEQEAPRKHGHVDWVFDHAVLRLHDPRRFGAVLWHPDEAGPIAAHPLLARLGIEPFDPRFDGRWLHAYFRGRRVAIKQALLAGDAVVGVGNIYASESLFRAGIDPRTAAQRVSAARCDRLAAAIRATLSDALDSGGSTLRDYVGASGEPGAYFAIHAAVYERAGLPCRVCGAPIRRLVQGQRATYFCPSCQKR</sequence>
<accession>Q7W185</accession>
<proteinExistence type="inferred from homology"/>
<comment type="function">
    <text evidence="2">Involved in base excision repair of DNA damaged by oxidation or by mutagenic agents. Acts as a DNA glycosylase that recognizes and removes damaged bases. Has a preference for oxidized purines, such as 7,8-dihydro-8-oxoguanine (8-oxoG). Has AP (apurinic/apyrimidinic) lyase activity and introduces nicks in the DNA strand. Cleaves the DNA backbone by beta-delta elimination to generate a single-strand break at the site of the removed base with both 3'- and 5'-phosphates.</text>
</comment>
<comment type="catalytic activity">
    <reaction evidence="2">
        <text>Hydrolysis of DNA containing ring-opened 7-methylguanine residues, releasing 2,6-diamino-4-hydroxy-5-(N-methyl)formamidopyrimidine.</text>
        <dbReference type="EC" id="3.2.2.23"/>
    </reaction>
</comment>
<comment type="catalytic activity">
    <reaction evidence="2">
        <text>2'-deoxyribonucleotide-(2'-deoxyribose 5'-phosphate)-2'-deoxyribonucleotide-DNA = a 3'-end 2'-deoxyribonucleotide-(2,3-dehydro-2,3-deoxyribose 5'-phosphate)-DNA + a 5'-end 5'-phospho-2'-deoxyribonucleoside-DNA + H(+)</text>
        <dbReference type="Rhea" id="RHEA:66592"/>
        <dbReference type="Rhea" id="RHEA-COMP:13180"/>
        <dbReference type="Rhea" id="RHEA-COMP:16897"/>
        <dbReference type="Rhea" id="RHEA-COMP:17067"/>
        <dbReference type="ChEBI" id="CHEBI:15378"/>
        <dbReference type="ChEBI" id="CHEBI:136412"/>
        <dbReference type="ChEBI" id="CHEBI:157695"/>
        <dbReference type="ChEBI" id="CHEBI:167181"/>
        <dbReference type="EC" id="4.2.99.18"/>
    </reaction>
</comment>
<comment type="cofactor">
    <cofactor evidence="2">
        <name>Zn(2+)</name>
        <dbReference type="ChEBI" id="CHEBI:29105"/>
    </cofactor>
    <text evidence="2">Binds 1 zinc ion per subunit.</text>
</comment>
<comment type="subunit">
    <text evidence="2">Monomer.</text>
</comment>
<comment type="similarity">
    <text evidence="2">Belongs to the FPG family.</text>
</comment>
<gene>
    <name evidence="2" type="primary">mutM</name>
    <name evidence="2" type="synonym">fpg</name>
    <name type="ordered locus">BPP0813</name>
</gene>
<name>FPG_BORPA</name>
<dbReference type="EC" id="3.2.2.23" evidence="2"/>
<dbReference type="EC" id="4.2.99.18" evidence="2"/>
<dbReference type="EMBL" id="BX640425">
    <property type="protein sequence ID" value="CAE40222.1"/>
    <property type="molecule type" value="Genomic_DNA"/>
</dbReference>
<dbReference type="RefSeq" id="WP_010927695.1">
    <property type="nucleotide sequence ID" value="NC_002928.3"/>
</dbReference>
<dbReference type="SMR" id="Q7W185"/>
<dbReference type="GeneID" id="93202563"/>
<dbReference type="KEGG" id="bpa:BPP0813"/>
<dbReference type="HOGENOM" id="CLU_038423_1_1_4"/>
<dbReference type="Proteomes" id="UP000001421">
    <property type="component" value="Chromosome"/>
</dbReference>
<dbReference type="GO" id="GO:0034039">
    <property type="term" value="F:8-oxo-7,8-dihydroguanine DNA N-glycosylase activity"/>
    <property type="evidence" value="ECO:0007669"/>
    <property type="project" value="TreeGrafter"/>
</dbReference>
<dbReference type="GO" id="GO:0140078">
    <property type="term" value="F:class I DNA-(apurinic or apyrimidinic site) endonuclease activity"/>
    <property type="evidence" value="ECO:0007669"/>
    <property type="project" value="UniProtKB-EC"/>
</dbReference>
<dbReference type="GO" id="GO:0003684">
    <property type="term" value="F:damaged DNA binding"/>
    <property type="evidence" value="ECO:0007669"/>
    <property type="project" value="InterPro"/>
</dbReference>
<dbReference type="GO" id="GO:0008270">
    <property type="term" value="F:zinc ion binding"/>
    <property type="evidence" value="ECO:0007669"/>
    <property type="project" value="UniProtKB-UniRule"/>
</dbReference>
<dbReference type="GO" id="GO:0006284">
    <property type="term" value="P:base-excision repair"/>
    <property type="evidence" value="ECO:0007669"/>
    <property type="project" value="InterPro"/>
</dbReference>
<dbReference type="CDD" id="cd08966">
    <property type="entry name" value="EcFpg-like_N"/>
    <property type="match status" value="1"/>
</dbReference>
<dbReference type="FunFam" id="1.10.8.50:FF:000003">
    <property type="entry name" value="Formamidopyrimidine-DNA glycosylase"/>
    <property type="match status" value="1"/>
</dbReference>
<dbReference type="Gene3D" id="1.10.8.50">
    <property type="match status" value="1"/>
</dbReference>
<dbReference type="Gene3D" id="3.20.190.10">
    <property type="entry name" value="MutM-like, N-terminal"/>
    <property type="match status" value="1"/>
</dbReference>
<dbReference type="HAMAP" id="MF_00103">
    <property type="entry name" value="Fapy_DNA_glycosyl"/>
    <property type="match status" value="1"/>
</dbReference>
<dbReference type="InterPro" id="IPR015886">
    <property type="entry name" value="DNA_glyclase/AP_lyase_DNA-bd"/>
</dbReference>
<dbReference type="InterPro" id="IPR015887">
    <property type="entry name" value="DNA_glyclase_Znf_dom_DNA_BS"/>
</dbReference>
<dbReference type="InterPro" id="IPR020629">
    <property type="entry name" value="Formamido-pyr_DNA_Glyclase"/>
</dbReference>
<dbReference type="InterPro" id="IPR012319">
    <property type="entry name" value="FPG_cat"/>
</dbReference>
<dbReference type="InterPro" id="IPR035937">
    <property type="entry name" value="MutM-like_N-ter"/>
</dbReference>
<dbReference type="InterPro" id="IPR010979">
    <property type="entry name" value="Ribosomal_uS13-like_H2TH"/>
</dbReference>
<dbReference type="InterPro" id="IPR000214">
    <property type="entry name" value="Znf_DNA_glyclase/AP_lyase"/>
</dbReference>
<dbReference type="InterPro" id="IPR010663">
    <property type="entry name" value="Znf_FPG/IleRS"/>
</dbReference>
<dbReference type="NCBIfam" id="TIGR00577">
    <property type="entry name" value="fpg"/>
    <property type="match status" value="1"/>
</dbReference>
<dbReference type="NCBIfam" id="NF002211">
    <property type="entry name" value="PRK01103.1"/>
    <property type="match status" value="1"/>
</dbReference>
<dbReference type="PANTHER" id="PTHR22993">
    <property type="entry name" value="FORMAMIDOPYRIMIDINE-DNA GLYCOSYLASE"/>
    <property type="match status" value="1"/>
</dbReference>
<dbReference type="PANTHER" id="PTHR22993:SF9">
    <property type="entry name" value="FORMAMIDOPYRIMIDINE-DNA GLYCOSYLASE"/>
    <property type="match status" value="1"/>
</dbReference>
<dbReference type="Pfam" id="PF01149">
    <property type="entry name" value="Fapy_DNA_glyco"/>
    <property type="match status" value="1"/>
</dbReference>
<dbReference type="Pfam" id="PF06831">
    <property type="entry name" value="H2TH"/>
    <property type="match status" value="1"/>
</dbReference>
<dbReference type="Pfam" id="PF06827">
    <property type="entry name" value="zf-FPG_IleRS"/>
    <property type="match status" value="1"/>
</dbReference>
<dbReference type="SMART" id="SM00898">
    <property type="entry name" value="Fapy_DNA_glyco"/>
    <property type="match status" value="1"/>
</dbReference>
<dbReference type="SMART" id="SM01232">
    <property type="entry name" value="H2TH"/>
    <property type="match status" value="1"/>
</dbReference>
<dbReference type="SUPFAM" id="SSF57716">
    <property type="entry name" value="Glucocorticoid receptor-like (DNA-binding domain)"/>
    <property type="match status" value="1"/>
</dbReference>
<dbReference type="SUPFAM" id="SSF81624">
    <property type="entry name" value="N-terminal domain of MutM-like DNA repair proteins"/>
    <property type="match status" value="1"/>
</dbReference>
<dbReference type="SUPFAM" id="SSF46946">
    <property type="entry name" value="S13-like H2TH domain"/>
    <property type="match status" value="1"/>
</dbReference>
<dbReference type="PROSITE" id="PS51068">
    <property type="entry name" value="FPG_CAT"/>
    <property type="match status" value="1"/>
</dbReference>
<dbReference type="PROSITE" id="PS01242">
    <property type="entry name" value="ZF_FPG_1"/>
    <property type="match status" value="1"/>
</dbReference>
<dbReference type="PROSITE" id="PS51066">
    <property type="entry name" value="ZF_FPG_2"/>
    <property type="match status" value="1"/>
</dbReference>
<protein>
    <recommendedName>
        <fullName evidence="2">Formamidopyrimidine-DNA glycosylase</fullName>
        <shortName evidence="2">Fapy-DNA glycosylase</shortName>
        <ecNumber evidence="2">3.2.2.23</ecNumber>
    </recommendedName>
    <alternativeName>
        <fullName evidence="2">DNA-(apurinic or apyrimidinic site) lyase MutM</fullName>
        <shortName evidence="2">AP lyase MutM</shortName>
        <ecNumber evidence="2">4.2.99.18</ecNumber>
    </alternativeName>
</protein>
<evidence type="ECO:0000250" key="1"/>
<evidence type="ECO:0000255" key="2">
    <source>
        <dbReference type="HAMAP-Rule" id="MF_00103"/>
    </source>
</evidence>
<reference key="1">
    <citation type="journal article" date="2003" name="Nat. Genet.">
        <title>Comparative analysis of the genome sequences of Bordetella pertussis, Bordetella parapertussis and Bordetella bronchiseptica.</title>
        <authorList>
            <person name="Parkhill J."/>
            <person name="Sebaihia M."/>
            <person name="Preston A."/>
            <person name="Murphy L.D."/>
            <person name="Thomson N.R."/>
            <person name="Harris D.E."/>
            <person name="Holden M.T.G."/>
            <person name="Churcher C.M."/>
            <person name="Bentley S.D."/>
            <person name="Mungall K.L."/>
            <person name="Cerdeno-Tarraga A.-M."/>
            <person name="Temple L."/>
            <person name="James K.D."/>
            <person name="Harris B."/>
            <person name="Quail M.A."/>
            <person name="Achtman M."/>
            <person name="Atkin R."/>
            <person name="Baker S."/>
            <person name="Basham D."/>
            <person name="Bason N."/>
            <person name="Cherevach I."/>
            <person name="Chillingworth T."/>
            <person name="Collins M."/>
            <person name="Cronin A."/>
            <person name="Davis P."/>
            <person name="Doggett J."/>
            <person name="Feltwell T."/>
            <person name="Goble A."/>
            <person name="Hamlin N."/>
            <person name="Hauser H."/>
            <person name="Holroyd S."/>
            <person name="Jagels K."/>
            <person name="Leather S."/>
            <person name="Moule S."/>
            <person name="Norberczak H."/>
            <person name="O'Neil S."/>
            <person name="Ormond D."/>
            <person name="Price C."/>
            <person name="Rabbinowitsch E."/>
            <person name="Rutter S."/>
            <person name="Sanders M."/>
            <person name="Saunders D."/>
            <person name="Seeger K."/>
            <person name="Sharp S."/>
            <person name="Simmonds M."/>
            <person name="Skelton J."/>
            <person name="Squares R."/>
            <person name="Squares S."/>
            <person name="Stevens K."/>
            <person name="Unwin L."/>
            <person name="Whitehead S."/>
            <person name="Barrell B.G."/>
            <person name="Maskell D.J."/>
        </authorList>
    </citation>
    <scope>NUCLEOTIDE SEQUENCE [LARGE SCALE GENOMIC DNA]</scope>
    <source>
        <strain>12822 / ATCC BAA-587 / NCTC 13253</strain>
    </source>
</reference>